<gene>
    <name type="ordered locus">plu3840</name>
</gene>
<sequence>MFGKGGLGNLMKQAQQMQDKMQKMQEEIASLEVTGESGAGLVKVTINGAHNCRRVEIDPSLMEDDKEMLEDLIAAAFNDAARRIEETQKEKMAGISSGMQLPPGFKMPF</sequence>
<dbReference type="EMBL" id="BX571871">
    <property type="protein sequence ID" value="CAE16212.1"/>
    <property type="molecule type" value="Genomic_DNA"/>
</dbReference>
<dbReference type="RefSeq" id="WP_011147979.1">
    <property type="nucleotide sequence ID" value="NC_005126.1"/>
</dbReference>
<dbReference type="SMR" id="Q7N0P1"/>
<dbReference type="STRING" id="243265.plu3840"/>
<dbReference type="GeneID" id="48850070"/>
<dbReference type="KEGG" id="plu:plu3840"/>
<dbReference type="eggNOG" id="COG0718">
    <property type="taxonomic scope" value="Bacteria"/>
</dbReference>
<dbReference type="HOGENOM" id="CLU_140930_0_0_6"/>
<dbReference type="OrthoDB" id="9808738at2"/>
<dbReference type="Proteomes" id="UP000002514">
    <property type="component" value="Chromosome"/>
</dbReference>
<dbReference type="GO" id="GO:0043590">
    <property type="term" value="C:bacterial nucleoid"/>
    <property type="evidence" value="ECO:0007669"/>
    <property type="project" value="UniProtKB-UniRule"/>
</dbReference>
<dbReference type="GO" id="GO:0005829">
    <property type="term" value="C:cytosol"/>
    <property type="evidence" value="ECO:0007669"/>
    <property type="project" value="TreeGrafter"/>
</dbReference>
<dbReference type="GO" id="GO:0003677">
    <property type="term" value="F:DNA binding"/>
    <property type="evidence" value="ECO:0007669"/>
    <property type="project" value="UniProtKB-UniRule"/>
</dbReference>
<dbReference type="FunFam" id="3.30.1310.10:FF:000001">
    <property type="entry name" value="Nucleoid-associated protein YbaB"/>
    <property type="match status" value="1"/>
</dbReference>
<dbReference type="Gene3D" id="3.30.1310.10">
    <property type="entry name" value="Nucleoid-associated protein YbaB-like domain"/>
    <property type="match status" value="1"/>
</dbReference>
<dbReference type="HAMAP" id="MF_00274">
    <property type="entry name" value="DNA_YbaB_EbfC"/>
    <property type="match status" value="1"/>
</dbReference>
<dbReference type="InterPro" id="IPR036894">
    <property type="entry name" value="YbaB-like_sf"/>
</dbReference>
<dbReference type="InterPro" id="IPR004401">
    <property type="entry name" value="YbaB/EbfC"/>
</dbReference>
<dbReference type="NCBIfam" id="TIGR00103">
    <property type="entry name" value="DNA_YbaB_EbfC"/>
    <property type="match status" value="1"/>
</dbReference>
<dbReference type="PANTHER" id="PTHR33449">
    <property type="entry name" value="NUCLEOID-ASSOCIATED PROTEIN YBAB"/>
    <property type="match status" value="1"/>
</dbReference>
<dbReference type="PANTHER" id="PTHR33449:SF1">
    <property type="entry name" value="NUCLEOID-ASSOCIATED PROTEIN YBAB"/>
    <property type="match status" value="1"/>
</dbReference>
<dbReference type="Pfam" id="PF02575">
    <property type="entry name" value="YbaB_DNA_bd"/>
    <property type="match status" value="1"/>
</dbReference>
<dbReference type="PIRSF" id="PIRSF004555">
    <property type="entry name" value="UCP004555"/>
    <property type="match status" value="1"/>
</dbReference>
<dbReference type="SUPFAM" id="SSF82607">
    <property type="entry name" value="YbaB-like"/>
    <property type="match status" value="1"/>
</dbReference>
<accession>Q7N0P1</accession>
<protein>
    <recommendedName>
        <fullName evidence="1">Nucleoid-associated protein plu3840</fullName>
    </recommendedName>
</protein>
<name>Y3840_PHOLL</name>
<evidence type="ECO:0000255" key="1">
    <source>
        <dbReference type="HAMAP-Rule" id="MF_00274"/>
    </source>
</evidence>
<evidence type="ECO:0000256" key="2">
    <source>
        <dbReference type="SAM" id="MobiDB-lite"/>
    </source>
</evidence>
<organism>
    <name type="scientific">Photorhabdus laumondii subsp. laumondii (strain DSM 15139 / CIP 105565 / TT01)</name>
    <name type="common">Photorhabdus luminescens subsp. laumondii</name>
    <dbReference type="NCBI Taxonomy" id="243265"/>
    <lineage>
        <taxon>Bacteria</taxon>
        <taxon>Pseudomonadati</taxon>
        <taxon>Pseudomonadota</taxon>
        <taxon>Gammaproteobacteria</taxon>
        <taxon>Enterobacterales</taxon>
        <taxon>Morganellaceae</taxon>
        <taxon>Photorhabdus</taxon>
    </lineage>
</organism>
<proteinExistence type="inferred from homology"/>
<feature type="chain" id="PRO_0000170419" description="Nucleoid-associated protein plu3840">
    <location>
        <begin position="1"/>
        <end position="109"/>
    </location>
</feature>
<feature type="region of interest" description="Disordered" evidence="2">
    <location>
        <begin position="1"/>
        <end position="23"/>
    </location>
</feature>
<feature type="region of interest" description="Disordered" evidence="2">
    <location>
        <begin position="89"/>
        <end position="109"/>
    </location>
</feature>
<keyword id="KW-0963">Cytoplasm</keyword>
<keyword id="KW-0238">DNA-binding</keyword>
<keyword id="KW-1185">Reference proteome</keyword>
<comment type="function">
    <text evidence="1">Binds to DNA and alters its conformation. May be involved in regulation of gene expression, nucleoid organization and DNA protection.</text>
</comment>
<comment type="subunit">
    <text evidence="1">Homodimer.</text>
</comment>
<comment type="subcellular location">
    <subcellularLocation>
        <location evidence="1">Cytoplasm</location>
        <location evidence="1">Nucleoid</location>
    </subcellularLocation>
</comment>
<comment type="similarity">
    <text evidence="1">Belongs to the YbaB/EbfC family.</text>
</comment>
<reference key="1">
    <citation type="journal article" date="2003" name="Nat. Biotechnol.">
        <title>The genome sequence of the entomopathogenic bacterium Photorhabdus luminescens.</title>
        <authorList>
            <person name="Duchaud E."/>
            <person name="Rusniok C."/>
            <person name="Frangeul L."/>
            <person name="Buchrieser C."/>
            <person name="Givaudan A."/>
            <person name="Taourit S."/>
            <person name="Bocs S."/>
            <person name="Boursaux-Eude C."/>
            <person name="Chandler M."/>
            <person name="Charles J.-F."/>
            <person name="Dassa E."/>
            <person name="Derose R."/>
            <person name="Derzelle S."/>
            <person name="Freyssinet G."/>
            <person name="Gaudriault S."/>
            <person name="Medigue C."/>
            <person name="Lanois A."/>
            <person name="Powell K."/>
            <person name="Siguier P."/>
            <person name="Vincent R."/>
            <person name="Wingate V."/>
            <person name="Zouine M."/>
            <person name="Glaser P."/>
            <person name="Boemare N."/>
            <person name="Danchin A."/>
            <person name="Kunst F."/>
        </authorList>
    </citation>
    <scope>NUCLEOTIDE SEQUENCE [LARGE SCALE GENOMIC DNA]</scope>
    <source>
        <strain>DSM 15139 / CIP 105565 / TT01</strain>
    </source>
</reference>